<gene>
    <name evidence="1" type="primary">murD</name>
    <name type="ordered locus">CLM_4002</name>
</gene>
<accession>C1FNC3</accession>
<reference key="1">
    <citation type="submission" date="2008-10" db="EMBL/GenBank/DDBJ databases">
        <title>Genome sequence of Clostridium botulinum A2 Kyoto.</title>
        <authorList>
            <person name="Shrivastava S."/>
            <person name="Brinkac L.M."/>
            <person name="Brown J.L."/>
            <person name="Bruce D."/>
            <person name="Detter C.C."/>
            <person name="Johnson E.A."/>
            <person name="Munk C.A."/>
            <person name="Smith L.A."/>
            <person name="Smith T.J."/>
            <person name="Sutton G."/>
            <person name="Brettin T.S."/>
        </authorList>
    </citation>
    <scope>NUCLEOTIDE SEQUENCE [LARGE SCALE GENOMIC DNA]</scope>
    <source>
        <strain>Kyoto / Type A2</strain>
    </source>
</reference>
<name>MURD_CLOBJ</name>
<dbReference type="EC" id="6.3.2.9" evidence="1"/>
<dbReference type="EMBL" id="CP001581">
    <property type="protein sequence ID" value="ACO85943.1"/>
    <property type="molecule type" value="Genomic_DNA"/>
</dbReference>
<dbReference type="RefSeq" id="WP_012705036.1">
    <property type="nucleotide sequence ID" value="NC_012563.1"/>
</dbReference>
<dbReference type="SMR" id="C1FNC3"/>
<dbReference type="KEGG" id="cby:CLM_4002"/>
<dbReference type="eggNOG" id="COG0771">
    <property type="taxonomic scope" value="Bacteria"/>
</dbReference>
<dbReference type="HOGENOM" id="CLU_032540_0_1_9"/>
<dbReference type="UniPathway" id="UPA00219"/>
<dbReference type="Proteomes" id="UP000001374">
    <property type="component" value="Chromosome"/>
</dbReference>
<dbReference type="GO" id="GO:0005737">
    <property type="term" value="C:cytoplasm"/>
    <property type="evidence" value="ECO:0007669"/>
    <property type="project" value="UniProtKB-SubCell"/>
</dbReference>
<dbReference type="GO" id="GO:0005524">
    <property type="term" value="F:ATP binding"/>
    <property type="evidence" value="ECO:0007669"/>
    <property type="project" value="UniProtKB-UniRule"/>
</dbReference>
<dbReference type="GO" id="GO:0008764">
    <property type="term" value="F:UDP-N-acetylmuramoylalanine-D-glutamate ligase activity"/>
    <property type="evidence" value="ECO:0007669"/>
    <property type="project" value="UniProtKB-UniRule"/>
</dbReference>
<dbReference type="GO" id="GO:0051301">
    <property type="term" value="P:cell division"/>
    <property type="evidence" value="ECO:0007669"/>
    <property type="project" value="UniProtKB-KW"/>
</dbReference>
<dbReference type="GO" id="GO:0071555">
    <property type="term" value="P:cell wall organization"/>
    <property type="evidence" value="ECO:0007669"/>
    <property type="project" value="UniProtKB-KW"/>
</dbReference>
<dbReference type="GO" id="GO:0009252">
    <property type="term" value="P:peptidoglycan biosynthetic process"/>
    <property type="evidence" value="ECO:0007669"/>
    <property type="project" value="UniProtKB-UniRule"/>
</dbReference>
<dbReference type="GO" id="GO:0008360">
    <property type="term" value="P:regulation of cell shape"/>
    <property type="evidence" value="ECO:0007669"/>
    <property type="project" value="UniProtKB-KW"/>
</dbReference>
<dbReference type="Gene3D" id="3.90.190.20">
    <property type="entry name" value="Mur ligase, C-terminal domain"/>
    <property type="match status" value="1"/>
</dbReference>
<dbReference type="Gene3D" id="3.40.1190.10">
    <property type="entry name" value="Mur-like, catalytic domain"/>
    <property type="match status" value="1"/>
</dbReference>
<dbReference type="Gene3D" id="3.40.50.720">
    <property type="entry name" value="NAD(P)-binding Rossmann-like Domain"/>
    <property type="match status" value="1"/>
</dbReference>
<dbReference type="HAMAP" id="MF_00639">
    <property type="entry name" value="MurD"/>
    <property type="match status" value="1"/>
</dbReference>
<dbReference type="InterPro" id="IPR036565">
    <property type="entry name" value="Mur-like_cat_sf"/>
</dbReference>
<dbReference type="InterPro" id="IPR004101">
    <property type="entry name" value="Mur_ligase_C"/>
</dbReference>
<dbReference type="InterPro" id="IPR036615">
    <property type="entry name" value="Mur_ligase_C_dom_sf"/>
</dbReference>
<dbReference type="InterPro" id="IPR013221">
    <property type="entry name" value="Mur_ligase_cen"/>
</dbReference>
<dbReference type="InterPro" id="IPR005762">
    <property type="entry name" value="MurD"/>
</dbReference>
<dbReference type="NCBIfam" id="TIGR01087">
    <property type="entry name" value="murD"/>
    <property type="match status" value="1"/>
</dbReference>
<dbReference type="PANTHER" id="PTHR43692">
    <property type="entry name" value="UDP-N-ACETYLMURAMOYLALANINE--D-GLUTAMATE LIGASE"/>
    <property type="match status" value="1"/>
</dbReference>
<dbReference type="PANTHER" id="PTHR43692:SF1">
    <property type="entry name" value="UDP-N-ACETYLMURAMOYLALANINE--D-GLUTAMATE LIGASE"/>
    <property type="match status" value="1"/>
</dbReference>
<dbReference type="Pfam" id="PF02875">
    <property type="entry name" value="Mur_ligase_C"/>
    <property type="match status" value="1"/>
</dbReference>
<dbReference type="Pfam" id="PF08245">
    <property type="entry name" value="Mur_ligase_M"/>
    <property type="match status" value="1"/>
</dbReference>
<dbReference type="Pfam" id="PF21799">
    <property type="entry name" value="MurD-like_N"/>
    <property type="match status" value="1"/>
</dbReference>
<dbReference type="SUPFAM" id="SSF51984">
    <property type="entry name" value="MurCD N-terminal domain"/>
    <property type="match status" value="1"/>
</dbReference>
<dbReference type="SUPFAM" id="SSF53623">
    <property type="entry name" value="MurD-like peptide ligases, catalytic domain"/>
    <property type="match status" value="1"/>
</dbReference>
<dbReference type="SUPFAM" id="SSF53244">
    <property type="entry name" value="MurD-like peptide ligases, peptide-binding domain"/>
    <property type="match status" value="1"/>
</dbReference>
<protein>
    <recommendedName>
        <fullName evidence="1">UDP-N-acetylmuramoylalanine--D-glutamate ligase</fullName>
        <ecNumber evidence="1">6.3.2.9</ecNumber>
    </recommendedName>
    <alternativeName>
        <fullName evidence="1">D-glutamic acid-adding enzyme</fullName>
    </alternativeName>
    <alternativeName>
        <fullName evidence="1">UDP-N-acetylmuramoyl-L-alanyl-D-glutamate synthetase</fullName>
    </alternativeName>
</protein>
<feature type="chain" id="PRO_1000147399" description="UDP-N-acetylmuramoylalanine--D-glutamate ligase">
    <location>
        <begin position="1"/>
        <end position="458"/>
    </location>
</feature>
<feature type="binding site" evidence="1">
    <location>
        <begin position="124"/>
        <end position="130"/>
    </location>
    <ligand>
        <name>ATP</name>
        <dbReference type="ChEBI" id="CHEBI:30616"/>
    </ligand>
</feature>
<sequence length="458" mass="51647">MKSNFSKFKDFIKYKKVAVVGIGVSNRPLIKFLVKLGAKVTAFDKKHREKLGSISLELEEIGVDLVLGENYLDKLDGYDVIFKTPSMRIDRPEFVKAKEAGAYITSEMEEFIKYCPAKVFGITGSDGKTTTTTLVYEMLKKEDYRTWVGGNIGTPLFANIEEMKEDHMVVLELSSFQLMTMDVSPEISLITNLSPNHLDVHKDFEEYVWAKKNIFKYQSSNNLLVLNKDDDLTNEMENEALGDVLKFSLVEKVYNGACLSNNKLTIQGKEVCDSKDIKLKGRHNIANLLAAFCMINKYVSIDSMKYVATNFSGVEHRCEFIREVNGVKYYNDSIASSPSRTLAGLNSFEKPVILIAGGYDKKIPFEPLAEGGYDKIKILILMGDTKNKIKSAFEKVISYKKCEMEIVIVNSMEEAVKVADNMAEKGDIITLSPACASFDMYPNFEIRGNEFKNIVNRL</sequence>
<comment type="function">
    <text evidence="1">Cell wall formation. Catalyzes the addition of glutamate to the nucleotide precursor UDP-N-acetylmuramoyl-L-alanine (UMA).</text>
</comment>
<comment type="catalytic activity">
    <reaction evidence="1">
        <text>UDP-N-acetyl-alpha-D-muramoyl-L-alanine + D-glutamate + ATP = UDP-N-acetyl-alpha-D-muramoyl-L-alanyl-D-glutamate + ADP + phosphate + H(+)</text>
        <dbReference type="Rhea" id="RHEA:16429"/>
        <dbReference type="ChEBI" id="CHEBI:15378"/>
        <dbReference type="ChEBI" id="CHEBI:29986"/>
        <dbReference type="ChEBI" id="CHEBI:30616"/>
        <dbReference type="ChEBI" id="CHEBI:43474"/>
        <dbReference type="ChEBI" id="CHEBI:83898"/>
        <dbReference type="ChEBI" id="CHEBI:83900"/>
        <dbReference type="ChEBI" id="CHEBI:456216"/>
        <dbReference type="EC" id="6.3.2.9"/>
    </reaction>
</comment>
<comment type="pathway">
    <text evidence="1">Cell wall biogenesis; peptidoglycan biosynthesis.</text>
</comment>
<comment type="subcellular location">
    <subcellularLocation>
        <location evidence="1">Cytoplasm</location>
    </subcellularLocation>
</comment>
<comment type="similarity">
    <text evidence="1">Belongs to the MurCDEF family.</text>
</comment>
<keyword id="KW-0067">ATP-binding</keyword>
<keyword id="KW-0131">Cell cycle</keyword>
<keyword id="KW-0132">Cell division</keyword>
<keyword id="KW-0133">Cell shape</keyword>
<keyword id="KW-0961">Cell wall biogenesis/degradation</keyword>
<keyword id="KW-0963">Cytoplasm</keyword>
<keyword id="KW-0436">Ligase</keyword>
<keyword id="KW-0547">Nucleotide-binding</keyword>
<keyword id="KW-0573">Peptidoglycan synthesis</keyword>
<evidence type="ECO:0000255" key="1">
    <source>
        <dbReference type="HAMAP-Rule" id="MF_00639"/>
    </source>
</evidence>
<organism>
    <name type="scientific">Clostridium botulinum (strain Kyoto / Type A2)</name>
    <dbReference type="NCBI Taxonomy" id="536232"/>
    <lineage>
        <taxon>Bacteria</taxon>
        <taxon>Bacillati</taxon>
        <taxon>Bacillota</taxon>
        <taxon>Clostridia</taxon>
        <taxon>Eubacteriales</taxon>
        <taxon>Clostridiaceae</taxon>
        <taxon>Clostridium</taxon>
    </lineage>
</organism>
<proteinExistence type="inferred from homology"/>